<comment type="function">
    <text evidence="1">Produces ATP from ADP in the presence of a proton gradient across the membrane. The catalytic sites are hosted primarily by the beta subunits.</text>
</comment>
<comment type="catalytic activity">
    <reaction evidence="1">
        <text>ATP + H2O + 4 H(+)(in) = ADP + phosphate + 5 H(+)(out)</text>
        <dbReference type="Rhea" id="RHEA:57720"/>
        <dbReference type="ChEBI" id="CHEBI:15377"/>
        <dbReference type="ChEBI" id="CHEBI:15378"/>
        <dbReference type="ChEBI" id="CHEBI:30616"/>
        <dbReference type="ChEBI" id="CHEBI:43474"/>
        <dbReference type="ChEBI" id="CHEBI:456216"/>
        <dbReference type="EC" id="7.1.2.2"/>
    </reaction>
</comment>
<comment type="subunit">
    <text evidence="1">F-type ATPases have 2 components, CF(1) - the catalytic core - and CF(0) - the membrane proton channel. CF(1) has five subunits: alpha(3), beta(3), gamma(1), delta(1), epsilon(1). CF(0) has four main subunits: a(1), b(1), b'(1) and c(9-12).</text>
</comment>
<comment type="subcellular location">
    <subcellularLocation>
        <location evidence="1">Plastid</location>
        <location evidence="1">Chloroplast thylakoid membrane</location>
        <topology evidence="1">Peripheral membrane protein</topology>
    </subcellularLocation>
</comment>
<comment type="similarity">
    <text evidence="1">Belongs to the ATPase alpha/beta chains family.</text>
</comment>
<name>ATPB_MORIN</name>
<proteinExistence type="inferred from homology"/>
<organism>
    <name type="scientific">Morus indica</name>
    <name type="common">Mulberry</name>
    <dbReference type="NCBI Taxonomy" id="248361"/>
    <lineage>
        <taxon>Eukaryota</taxon>
        <taxon>Viridiplantae</taxon>
        <taxon>Streptophyta</taxon>
        <taxon>Embryophyta</taxon>
        <taxon>Tracheophyta</taxon>
        <taxon>Spermatophyta</taxon>
        <taxon>Magnoliopsida</taxon>
        <taxon>eudicotyledons</taxon>
        <taxon>Gunneridae</taxon>
        <taxon>Pentapetalae</taxon>
        <taxon>rosids</taxon>
        <taxon>fabids</taxon>
        <taxon>Rosales</taxon>
        <taxon>Moraceae</taxon>
        <taxon>Moreae</taxon>
        <taxon>Morus</taxon>
    </lineage>
</organism>
<keyword id="KW-0066">ATP synthesis</keyword>
<keyword id="KW-0067">ATP-binding</keyword>
<keyword id="KW-0139">CF(1)</keyword>
<keyword id="KW-0150">Chloroplast</keyword>
<keyword id="KW-0375">Hydrogen ion transport</keyword>
<keyword id="KW-0406">Ion transport</keyword>
<keyword id="KW-0472">Membrane</keyword>
<keyword id="KW-0547">Nucleotide-binding</keyword>
<keyword id="KW-0934">Plastid</keyword>
<keyword id="KW-0793">Thylakoid</keyword>
<keyword id="KW-1278">Translocase</keyword>
<keyword id="KW-0813">Transport</keyword>
<sequence length="498" mass="53792">MRINPTTSSPGVPALEKKNLGRIAQIIGPVLDVAFPPGKMPNIYNALVVKGRDTVGQQINVTCEVQQLLGNNRVRAVAMSATDGLMRGMEVIDTGAPLSVPVGGATLGRIFNVLGEPIDNLGPVDTRTTSPIHRSAPAFIQLDTKLSIFETGIKVVDLLAPYRRGGKIGLFGGAGVGKTVLIMELINNIAKAHGGVSVFGGVGERTREGNDLYMEMKESGVINEQNIAESKVALVYGQMNEPPGARMRVGLTALTMAEYFRDVNEQDVLLFIDNIFRFVQAGSEVSALLGRMPSAVGYQPTLSTEMGSLQERITSTKEGSITSIQAVYVPADDLTDPAPATTFAHLDATTVLSRGLAAKGIYPAVDPLDSTSTMLQPRIVGEEHYETAQRVRQTLQRYKELQDIIAILGLDELSEEDRLTVARARKIERFLSQPFFVAEVFTGSPGKYVGLAETIRGFKLILSGELDGLPEQAFYLVGNIDEATAKAMNLEMENKLKK</sequence>
<reference key="1">
    <citation type="submission" date="2005-09" db="EMBL/GenBank/DDBJ databases">
        <title>The chloroplast genome of mulberry: structural features and comparative analysis.</title>
        <authorList>
            <person name="Ravi V."/>
            <person name="Khurana J.P."/>
            <person name="Tyagi A.K."/>
            <person name="Khurana P."/>
        </authorList>
    </citation>
    <scope>NUCLEOTIDE SEQUENCE [LARGE SCALE GENOMIC DNA]</scope>
    <source>
        <strain>cv. K2</strain>
    </source>
</reference>
<dbReference type="EC" id="7.1.2.2" evidence="1"/>
<dbReference type="EMBL" id="DQ226511">
    <property type="protein sequence ID" value="ABB20965.1"/>
    <property type="molecule type" value="Genomic_DNA"/>
</dbReference>
<dbReference type="RefSeq" id="YP_762268.1">
    <property type="nucleotide sequence ID" value="NC_008359.1"/>
</dbReference>
<dbReference type="SMR" id="Q09X10"/>
<dbReference type="GeneID" id="4290673"/>
<dbReference type="GO" id="GO:0009535">
    <property type="term" value="C:chloroplast thylakoid membrane"/>
    <property type="evidence" value="ECO:0007669"/>
    <property type="project" value="UniProtKB-SubCell"/>
</dbReference>
<dbReference type="GO" id="GO:0005739">
    <property type="term" value="C:mitochondrion"/>
    <property type="evidence" value="ECO:0007669"/>
    <property type="project" value="GOC"/>
</dbReference>
<dbReference type="GO" id="GO:0045259">
    <property type="term" value="C:proton-transporting ATP synthase complex"/>
    <property type="evidence" value="ECO:0007669"/>
    <property type="project" value="UniProtKB-KW"/>
</dbReference>
<dbReference type="GO" id="GO:0005524">
    <property type="term" value="F:ATP binding"/>
    <property type="evidence" value="ECO:0007669"/>
    <property type="project" value="UniProtKB-UniRule"/>
</dbReference>
<dbReference type="GO" id="GO:0016887">
    <property type="term" value="F:ATP hydrolysis activity"/>
    <property type="evidence" value="ECO:0007669"/>
    <property type="project" value="InterPro"/>
</dbReference>
<dbReference type="GO" id="GO:0046933">
    <property type="term" value="F:proton-transporting ATP synthase activity, rotational mechanism"/>
    <property type="evidence" value="ECO:0007669"/>
    <property type="project" value="UniProtKB-UniRule"/>
</dbReference>
<dbReference type="GO" id="GO:0042776">
    <property type="term" value="P:proton motive force-driven mitochondrial ATP synthesis"/>
    <property type="evidence" value="ECO:0007669"/>
    <property type="project" value="TreeGrafter"/>
</dbReference>
<dbReference type="CDD" id="cd18110">
    <property type="entry name" value="ATP-synt_F1_beta_C"/>
    <property type="match status" value="1"/>
</dbReference>
<dbReference type="CDD" id="cd18115">
    <property type="entry name" value="ATP-synt_F1_beta_N"/>
    <property type="match status" value="1"/>
</dbReference>
<dbReference type="CDD" id="cd01133">
    <property type="entry name" value="F1-ATPase_beta_CD"/>
    <property type="match status" value="1"/>
</dbReference>
<dbReference type="FunFam" id="1.10.1140.10:FF:000001">
    <property type="entry name" value="ATP synthase subunit beta"/>
    <property type="match status" value="1"/>
</dbReference>
<dbReference type="FunFam" id="3.40.50.300:FF:000004">
    <property type="entry name" value="ATP synthase subunit beta"/>
    <property type="match status" value="1"/>
</dbReference>
<dbReference type="FunFam" id="2.40.10.170:FF:000002">
    <property type="entry name" value="ATP synthase subunit beta, chloroplastic"/>
    <property type="match status" value="1"/>
</dbReference>
<dbReference type="Gene3D" id="2.40.10.170">
    <property type="match status" value="1"/>
</dbReference>
<dbReference type="Gene3D" id="1.10.1140.10">
    <property type="entry name" value="Bovine Mitochondrial F1-atpase, Atp Synthase Beta Chain, Chain D, domain 3"/>
    <property type="match status" value="1"/>
</dbReference>
<dbReference type="Gene3D" id="3.40.50.300">
    <property type="entry name" value="P-loop containing nucleotide triphosphate hydrolases"/>
    <property type="match status" value="1"/>
</dbReference>
<dbReference type="HAMAP" id="MF_01347">
    <property type="entry name" value="ATP_synth_beta_bact"/>
    <property type="match status" value="1"/>
</dbReference>
<dbReference type="InterPro" id="IPR003593">
    <property type="entry name" value="AAA+_ATPase"/>
</dbReference>
<dbReference type="InterPro" id="IPR055190">
    <property type="entry name" value="ATP-synt_VA_C"/>
</dbReference>
<dbReference type="InterPro" id="IPR005722">
    <property type="entry name" value="ATP_synth_F1_bsu"/>
</dbReference>
<dbReference type="InterPro" id="IPR020003">
    <property type="entry name" value="ATPase_a/bsu_AS"/>
</dbReference>
<dbReference type="InterPro" id="IPR050053">
    <property type="entry name" value="ATPase_alpha/beta_chains"/>
</dbReference>
<dbReference type="InterPro" id="IPR004100">
    <property type="entry name" value="ATPase_F1/V1/A1_a/bsu_N"/>
</dbReference>
<dbReference type="InterPro" id="IPR036121">
    <property type="entry name" value="ATPase_F1/V1/A1_a/bsu_N_sf"/>
</dbReference>
<dbReference type="InterPro" id="IPR000194">
    <property type="entry name" value="ATPase_F1/V1/A1_a/bsu_nucl-bd"/>
</dbReference>
<dbReference type="InterPro" id="IPR024034">
    <property type="entry name" value="ATPase_F1/V1_b/a_C"/>
</dbReference>
<dbReference type="InterPro" id="IPR027417">
    <property type="entry name" value="P-loop_NTPase"/>
</dbReference>
<dbReference type="NCBIfam" id="TIGR01039">
    <property type="entry name" value="atpD"/>
    <property type="match status" value="1"/>
</dbReference>
<dbReference type="PANTHER" id="PTHR15184">
    <property type="entry name" value="ATP SYNTHASE"/>
    <property type="match status" value="1"/>
</dbReference>
<dbReference type="PANTHER" id="PTHR15184:SF71">
    <property type="entry name" value="ATP SYNTHASE SUBUNIT BETA, MITOCHONDRIAL"/>
    <property type="match status" value="1"/>
</dbReference>
<dbReference type="Pfam" id="PF00006">
    <property type="entry name" value="ATP-synt_ab"/>
    <property type="match status" value="1"/>
</dbReference>
<dbReference type="Pfam" id="PF02874">
    <property type="entry name" value="ATP-synt_ab_N"/>
    <property type="match status" value="1"/>
</dbReference>
<dbReference type="Pfam" id="PF22919">
    <property type="entry name" value="ATP-synt_VA_C"/>
    <property type="match status" value="1"/>
</dbReference>
<dbReference type="SMART" id="SM00382">
    <property type="entry name" value="AAA"/>
    <property type="match status" value="1"/>
</dbReference>
<dbReference type="SUPFAM" id="SSF47917">
    <property type="entry name" value="C-terminal domain of alpha and beta subunits of F1 ATP synthase"/>
    <property type="match status" value="1"/>
</dbReference>
<dbReference type="SUPFAM" id="SSF50615">
    <property type="entry name" value="N-terminal domain of alpha and beta subunits of F1 ATP synthase"/>
    <property type="match status" value="1"/>
</dbReference>
<dbReference type="SUPFAM" id="SSF52540">
    <property type="entry name" value="P-loop containing nucleoside triphosphate hydrolases"/>
    <property type="match status" value="1"/>
</dbReference>
<dbReference type="PROSITE" id="PS00152">
    <property type="entry name" value="ATPASE_ALPHA_BETA"/>
    <property type="match status" value="1"/>
</dbReference>
<evidence type="ECO:0000255" key="1">
    <source>
        <dbReference type="HAMAP-Rule" id="MF_01347"/>
    </source>
</evidence>
<gene>
    <name evidence="1" type="primary">atpB</name>
    <name type="ordered locus">MoinCp028</name>
</gene>
<protein>
    <recommendedName>
        <fullName evidence="1">ATP synthase subunit beta, chloroplastic</fullName>
        <ecNumber evidence="1">7.1.2.2</ecNumber>
    </recommendedName>
    <alternativeName>
        <fullName evidence="1">ATP synthase F1 sector subunit beta</fullName>
    </alternativeName>
    <alternativeName>
        <fullName evidence="1">F-ATPase subunit beta</fullName>
    </alternativeName>
</protein>
<feature type="chain" id="PRO_0000275184" description="ATP synthase subunit beta, chloroplastic">
    <location>
        <begin position="1"/>
        <end position="498"/>
    </location>
</feature>
<feature type="binding site" evidence="1">
    <location>
        <begin position="172"/>
        <end position="179"/>
    </location>
    <ligand>
        <name>ATP</name>
        <dbReference type="ChEBI" id="CHEBI:30616"/>
    </ligand>
</feature>
<accession>Q09X10</accession>
<geneLocation type="chloroplast"/>